<organism>
    <name type="scientific">Escherichia phage Mu</name>
    <name type="common">Bacteriophage Mu</name>
    <dbReference type="NCBI Taxonomy" id="2681603"/>
    <lineage>
        <taxon>Viruses</taxon>
        <taxon>Duplodnaviria</taxon>
        <taxon>Heunggongvirae</taxon>
        <taxon>Uroviricota</taxon>
        <taxon>Caudoviricetes</taxon>
        <taxon>Muvirus</taxon>
        <taxon>Muvirus mu</taxon>
    </lineage>
</organism>
<proteinExistence type="evidence at protein level"/>
<reference key="1">
    <citation type="journal article" date="2002" name="J. Mol. Biol.">
        <title>Bacteriophage Mu genome sequence: analysis and comparison with Mu-like prophages in Haemophilus, Neisseria and Deinococcus.</title>
        <authorList>
            <person name="Morgan G.J."/>
            <person name="Hatfull G.F."/>
            <person name="Casjens S."/>
            <person name="Hendrix R.W."/>
        </authorList>
    </citation>
    <scope>NUCLEOTIDE SEQUENCE [LARGE SCALE GENOMIC DNA]</scope>
</reference>
<reference key="2">
    <citation type="journal article" date="2007" name="J. Mol. Biol.">
        <title>Rz/Rz1 lysis gene equivalents in phages of Gram-negative hosts.</title>
        <authorList>
            <person name="Summer E.J."/>
            <person name="Berry J."/>
            <person name="Tran T.A."/>
            <person name="Niu L."/>
            <person name="Struck D.K."/>
            <person name="Young R."/>
        </authorList>
    </citation>
    <scope>IDENTIFICATION</scope>
</reference>
<reference key="3">
    <citation type="journal article" date="1989" name="J. Bacteriol.">
        <title>Localization and regulation of bacteriophage Mu promoters.</title>
        <authorList>
            <person name="Stoddard S.F."/>
            <person name="Howe M.M."/>
        </authorList>
    </citation>
    <scope>INDUCTION</scope>
</reference>
<reference key="4">
    <citation type="journal article" date="2022" name="MBio">
        <title>Endolysin Regulation in Phage Mu Lysis.</title>
        <authorList>
            <person name="Chamblee J.S."/>
            <person name="Ramsey J."/>
            <person name="Chen Y."/>
            <person name="Maddox L.T."/>
            <person name="Ross C."/>
            <person name="To K.H."/>
            <person name="Cahill J.L."/>
            <person name="Young R."/>
        </authorList>
    </citation>
    <scope>FUNCTION</scope>
    <scope>SUBUNIT</scope>
</reference>
<feature type="chain" id="PRO_0000077816" description="Spanin, inner membrane subunit">
    <location>
        <begin position="1"/>
        <end position="128"/>
    </location>
</feature>
<feature type="transmembrane region" description="Helical" evidence="1">
    <location>
        <begin position="7"/>
        <end position="23"/>
    </location>
</feature>
<feature type="coiled-coil region" evidence="1">
    <location>
        <begin position="24"/>
        <end position="51"/>
    </location>
</feature>
<gene>
    <name type="ordered locus">Mup23</name>
</gene>
<sequence>MTFASKSLLLAAVFTAVLSGGLWHRLDSTRHDNQTLRRELQTEQQARHTAEWLLHGQEQTMQVFSAIRAANRAARLADETEHHDAKEKITTAITGDNCSTRPVPAVAADRLRELEKRTRAIGGDPARN</sequence>
<accession>Q9T1X1</accession>
<protein>
    <recommendedName>
        <fullName>Spanin, inner membrane subunit</fullName>
        <shortName>i-spanin</shortName>
    </recommendedName>
    <alternativeName>
        <fullName>gene product 23</fullName>
        <shortName>gp23</shortName>
    </alternativeName>
</protein>
<comment type="function">
    <text evidence="3">Component of the spanin complex that disrupts the host outer membrane and causes cell lysis during virus exit. The spanin complex conducts the final step in host lysis by disrupting the outer membrane after endolysin action has degraded the host peptidoglycans. Host outer membrane disruption is possibly due to local fusion between the inner and outer membrane performed by the spanin complex.</text>
</comment>
<comment type="subunit">
    <text evidence="5">Interacts with the spanin outer membrane subunit. Part of the spanin complex which spans the entire periplasmic space. The spanin complex is composed of spanin inner membrane subunit and spanin outer membrane subunit.</text>
</comment>
<comment type="subcellular location">
    <subcellularLocation>
        <location evidence="4">Host cell inner membrane</location>
        <topology evidence="4">Single-pass type II membrane protein</topology>
    </subcellularLocation>
</comment>
<comment type="induction">
    <text evidence="2">Expressed in the intermediate phase of the viral replicative cycle.</text>
</comment>
<dbReference type="EMBL" id="AF083977">
    <property type="protein sequence ID" value="AAF01101.1"/>
    <property type="molecule type" value="Genomic_DNA"/>
</dbReference>
<dbReference type="RefSeq" id="NP_050627.1">
    <property type="nucleotide sequence ID" value="NC_000929.1"/>
</dbReference>
<dbReference type="SMR" id="Q9T1X1"/>
<dbReference type="TCDB" id="1.M.7.1.1">
    <property type="family name" value="the phage mu spanin (spanin7) family"/>
</dbReference>
<dbReference type="GeneID" id="2636265"/>
<dbReference type="KEGG" id="vg:2636265"/>
<dbReference type="Proteomes" id="UP000002611">
    <property type="component" value="Genome"/>
</dbReference>
<dbReference type="GO" id="GO:0020002">
    <property type="term" value="C:host cell plasma membrane"/>
    <property type="evidence" value="ECO:0007669"/>
    <property type="project" value="UniProtKB-SubCell"/>
</dbReference>
<dbReference type="GO" id="GO:0016020">
    <property type="term" value="C:membrane"/>
    <property type="evidence" value="ECO:0007669"/>
    <property type="project" value="UniProtKB-KW"/>
</dbReference>
<dbReference type="GO" id="GO:0031640">
    <property type="term" value="P:killing of cells of another organism"/>
    <property type="evidence" value="ECO:0007669"/>
    <property type="project" value="UniProtKB-KW"/>
</dbReference>
<keyword id="KW-0175">Coiled coil</keyword>
<keyword id="KW-0204">Cytolysis</keyword>
<keyword id="KW-1030">Host cell inner membrane</keyword>
<keyword id="KW-0578">Host cell lysis by virus</keyword>
<keyword id="KW-1032">Host cell membrane</keyword>
<keyword id="KW-1043">Host membrane</keyword>
<keyword id="KW-0472">Membrane</keyword>
<keyword id="KW-1185">Reference proteome</keyword>
<keyword id="KW-0735">Signal-anchor</keyword>
<keyword id="KW-0812">Transmembrane</keyword>
<keyword id="KW-1133">Transmembrane helix</keyword>
<keyword id="KW-1188">Viral release from host cell</keyword>
<name>SPAN1_BPMU</name>
<organismHost>
    <name type="scientific">Enterobacteriaceae</name>
    <dbReference type="NCBI Taxonomy" id="543"/>
</organismHost>
<evidence type="ECO:0000255" key="1"/>
<evidence type="ECO:0000269" key="2">
    <source>
    </source>
</evidence>
<evidence type="ECO:0000269" key="3">
    <source>
    </source>
</evidence>
<evidence type="ECO:0000305" key="4"/>
<evidence type="ECO:0000305" key="5">
    <source>
    </source>
</evidence>